<feature type="chain" id="PRO_0000209823" description="DegV domain-containing 15.5 kDa protein">
    <location>
        <begin position="1"/>
        <end position="140"/>
    </location>
</feature>
<feature type="domain" description="DegV" evidence="3">
    <location>
        <begin position="4"/>
        <end position="140"/>
    </location>
</feature>
<feature type="binding site" evidence="2">
    <location>
        <position position="61"/>
    </location>
    <ligand>
        <name>hexadecanoate</name>
        <dbReference type="ChEBI" id="CHEBI:7896"/>
    </ligand>
</feature>
<feature type="binding site" evidence="2">
    <location>
        <position position="93"/>
    </location>
    <ligand>
        <name>hexadecanoate</name>
        <dbReference type="ChEBI" id="CHEBI:7896"/>
    </ligand>
</feature>
<proteinExistence type="inferred from homology"/>
<accession>P13977</accession>
<accession>E2EAE9</accession>
<comment type="function">
    <text evidence="1">May bind long-chain fatty acids, such as palmitate, and may play a role in lipid transport or fatty acid metabolism.</text>
</comment>
<name>YP15_STAAU</name>
<evidence type="ECO:0000250" key="1"/>
<evidence type="ECO:0000250" key="2">
    <source>
        <dbReference type="UniProtKB" id="Q9X1H9"/>
    </source>
</evidence>
<evidence type="ECO:0000255" key="3">
    <source>
        <dbReference type="PROSITE-ProRule" id="PRU00815"/>
    </source>
</evidence>
<reference key="1">
    <citation type="journal article" date="1989" name="Mol. Microbiol.">
        <title>Trimethoprim resistance transposon Tn4003 from Staphylococcus aureus encodes genes for a dihydrofolate reductase and thymidylate synthetase flanked by three copies of IS257.</title>
        <authorList>
            <person name="Rouch D.A."/>
            <person name="Messeroti L.J."/>
            <person name="Loo L.S.L."/>
            <person name="Jackson C.A."/>
            <person name="Skurray R.A."/>
        </authorList>
    </citation>
    <scope>NUCLEOTIDE SEQUENCE [GENOMIC DNA]</scope>
</reference>
<reference key="2">
    <citation type="journal article" date="2010" name="Plasmid">
        <title>Analysis of the prototypical Staphylococcus aureus multiresistance plasmid pSK1.</title>
        <authorList>
            <person name="Jensen S.O."/>
            <person name="Apisiridej S."/>
            <person name="Kwong S.M."/>
            <person name="Yang Y.H."/>
            <person name="Skurray R.A."/>
            <person name="Firth N."/>
        </authorList>
    </citation>
    <scope>NUCLEOTIDE SEQUENCE [GENOMIC DNA]</scope>
    <source>
        <strain>SK18</strain>
    </source>
</reference>
<sequence length="140" mass="15462">MAKQIIVTDSTSDLSHEYLKQHNIHVIPLSLTIDGKSYTDQADISSSEYIDHIENDADVKTSQPPIGRFIETYEQLAQDDVEIISIHLSSGLSGTYNTAVQASHMVDGNITVIDSKSISFGLGYQIKQIVELVLLQSKKI</sequence>
<keyword id="KW-0446">Lipid-binding</keyword>
<keyword id="KW-0614">Plasmid</keyword>
<dbReference type="EMBL" id="GU565967">
    <property type="protein sequence ID" value="ADK23695.1"/>
    <property type="molecule type" value="Genomic_DNA"/>
</dbReference>
<dbReference type="PIR" id="S04165">
    <property type="entry name" value="S04165"/>
</dbReference>
<dbReference type="RefSeq" id="YP_003813116.1">
    <property type="nucleotide sequence ID" value="NC_014369.1"/>
</dbReference>
<dbReference type="SMR" id="P13977"/>
<dbReference type="GO" id="GO:0008289">
    <property type="term" value="F:lipid binding"/>
    <property type="evidence" value="ECO:0007669"/>
    <property type="project" value="UniProtKB-KW"/>
</dbReference>
<dbReference type="Gene3D" id="3.40.50.10170">
    <property type="match status" value="1"/>
</dbReference>
<dbReference type="InterPro" id="IPR003797">
    <property type="entry name" value="DegV"/>
</dbReference>
<dbReference type="InterPro" id="IPR050270">
    <property type="entry name" value="DegV_domain_contain"/>
</dbReference>
<dbReference type="NCBIfam" id="TIGR00762">
    <property type="entry name" value="DegV"/>
    <property type="match status" value="1"/>
</dbReference>
<dbReference type="PANTHER" id="PTHR33434">
    <property type="entry name" value="DEGV DOMAIN-CONTAINING PROTEIN DR_1986-RELATED"/>
    <property type="match status" value="1"/>
</dbReference>
<dbReference type="PANTHER" id="PTHR33434:SF8">
    <property type="entry name" value="DEGV DOMAIN-CONTAINING PROTEIN SPR1019"/>
    <property type="match status" value="1"/>
</dbReference>
<dbReference type="Pfam" id="PF02645">
    <property type="entry name" value="DegV"/>
    <property type="match status" value="1"/>
</dbReference>
<dbReference type="SUPFAM" id="SSF82549">
    <property type="entry name" value="DAK1/DegV-like"/>
    <property type="match status" value="1"/>
</dbReference>
<dbReference type="PROSITE" id="PS51482">
    <property type="entry name" value="DEGV"/>
    <property type="match status" value="1"/>
</dbReference>
<organism>
    <name type="scientific">Staphylococcus aureus</name>
    <dbReference type="NCBI Taxonomy" id="1280"/>
    <lineage>
        <taxon>Bacteria</taxon>
        <taxon>Bacillati</taxon>
        <taxon>Bacillota</taxon>
        <taxon>Bacilli</taxon>
        <taxon>Bacillales</taxon>
        <taxon>Staphylococcaceae</taxon>
        <taxon>Staphylococcus</taxon>
    </lineage>
</organism>
<geneLocation type="plasmid">
    <name>pSK1</name>
</geneLocation>
<protein>
    <recommendedName>
        <fullName>DegV domain-containing 15.5 kDa protein</fullName>
    </recommendedName>
</protein>